<gene>
    <name evidence="1" type="primary">dadA</name>
    <name type="ordered locus">SDY_1226</name>
</gene>
<accession>Q32H27</accession>
<proteinExistence type="inferred from homology"/>
<name>DADA_SHIDS</name>
<comment type="function">
    <text evidence="1">Oxidative deamination of D-amino acids.</text>
</comment>
<comment type="catalytic activity">
    <reaction evidence="1">
        <text>a D-alpha-amino acid + A + H2O = a 2-oxocarboxylate + AH2 + NH4(+)</text>
        <dbReference type="Rhea" id="RHEA:18125"/>
        <dbReference type="ChEBI" id="CHEBI:13193"/>
        <dbReference type="ChEBI" id="CHEBI:15377"/>
        <dbReference type="ChEBI" id="CHEBI:17499"/>
        <dbReference type="ChEBI" id="CHEBI:28938"/>
        <dbReference type="ChEBI" id="CHEBI:35179"/>
        <dbReference type="ChEBI" id="CHEBI:59871"/>
    </reaction>
</comment>
<comment type="cofactor">
    <cofactor evidence="1">
        <name>FAD</name>
        <dbReference type="ChEBI" id="CHEBI:57692"/>
    </cofactor>
</comment>
<comment type="pathway">
    <text>Amino-acid degradation; D-alanine degradation; NH(3) and pyruvate from D-alanine: step 1/1.</text>
</comment>
<comment type="similarity">
    <text evidence="1">Belongs to the DadA oxidoreductase family.</text>
</comment>
<evidence type="ECO:0000255" key="1">
    <source>
        <dbReference type="HAMAP-Rule" id="MF_01202"/>
    </source>
</evidence>
<keyword id="KW-0274">FAD</keyword>
<keyword id="KW-0285">Flavoprotein</keyword>
<keyword id="KW-0560">Oxidoreductase</keyword>
<keyword id="KW-1185">Reference proteome</keyword>
<sequence length="432" mass="47653">MRVVILGSGVVGVASAWYLNQAGHEVTVIDREPGAALETSAANAGQISPGYAAPWAAPGVPLKAIKWMFQRHAPLVVRLDGTQFQLKWMWQMLRNCDTSHYMENKGRMVRLAEYSRDCLKALRAETNIQYEGRQGGTLQLFRTEQQYENATRDIAVLEDAGVPYQLLESSRLAEVEPALAEVAHKLTGGLQLPNDETGDCQLFTQNLARMAEQAGVKFRFNTPVDQLLCDGEQIYGVKCGDEVIKADAYVMAFGSYSTAMLKGIVDIPVYPLKGYSLTIPIAQEDGAPVSTILDETYKIAITRFDNRMRVGGMAEIVGFNTELLQPRRETLEMVVRDLYPRGGHVEQATFWTGLRPMTPDGTPVVGRTRFKNLWLNTGHGTLGWTMACGSGQLLSDLLSGRTPAIPYEDLSVARYSRGFTPSRPGHLHGAHS</sequence>
<dbReference type="EC" id="1.4.99.-" evidence="1"/>
<dbReference type="EMBL" id="CP000034">
    <property type="protein sequence ID" value="ABB61378.1"/>
    <property type="molecule type" value="Genomic_DNA"/>
</dbReference>
<dbReference type="RefSeq" id="WP_001266921.1">
    <property type="nucleotide sequence ID" value="NC_007606.1"/>
</dbReference>
<dbReference type="RefSeq" id="YP_402869.1">
    <property type="nucleotide sequence ID" value="NC_007606.1"/>
</dbReference>
<dbReference type="SMR" id="Q32H27"/>
<dbReference type="STRING" id="300267.SDY_1226"/>
<dbReference type="EnsemblBacteria" id="ABB61378">
    <property type="protein sequence ID" value="ABB61378"/>
    <property type="gene ID" value="SDY_1226"/>
</dbReference>
<dbReference type="KEGG" id="sdy:SDY_1226"/>
<dbReference type="PATRIC" id="fig|300267.13.peg.1454"/>
<dbReference type="HOGENOM" id="CLU_007884_9_2_6"/>
<dbReference type="UniPathway" id="UPA00043">
    <property type="reaction ID" value="UER00498"/>
</dbReference>
<dbReference type="Proteomes" id="UP000002716">
    <property type="component" value="Chromosome"/>
</dbReference>
<dbReference type="GO" id="GO:0005737">
    <property type="term" value="C:cytoplasm"/>
    <property type="evidence" value="ECO:0007669"/>
    <property type="project" value="TreeGrafter"/>
</dbReference>
<dbReference type="GO" id="GO:0005886">
    <property type="term" value="C:plasma membrane"/>
    <property type="evidence" value="ECO:0007669"/>
    <property type="project" value="TreeGrafter"/>
</dbReference>
<dbReference type="GO" id="GO:0008718">
    <property type="term" value="F:D-amino-acid dehydrogenase activity"/>
    <property type="evidence" value="ECO:0007669"/>
    <property type="project" value="UniProtKB-UniRule"/>
</dbReference>
<dbReference type="GO" id="GO:0055130">
    <property type="term" value="P:D-alanine catabolic process"/>
    <property type="evidence" value="ECO:0007669"/>
    <property type="project" value="UniProtKB-UniPathway"/>
</dbReference>
<dbReference type="FunFam" id="3.50.50.60:FF:000020">
    <property type="entry name" value="D-amino acid dehydrogenase"/>
    <property type="match status" value="1"/>
</dbReference>
<dbReference type="Gene3D" id="3.30.9.10">
    <property type="entry name" value="D-Amino Acid Oxidase, subunit A, domain 2"/>
    <property type="match status" value="1"/>
</dbReference>
<dbReference type="Gene3D" id="3.50.50.60">
    <property type="entry name" value="FAD/NAD(P)-binding domain"/>
    <property type="match status" value="2"/>
</dbReference>
<dbReference type="HAMAP" id="MF_01202">
    <property type="entry name" value="DadA"/>
    <property type="match status" value="1"/>
</dbReference>
<dbReference type="InterPro" id="IPR023080">
    <property type="entry name" value="DadA"/>
</dbReference>
<dbReference type="InterPro" id="IPR006076">
    <property type="entry name" value="FAD-dep_OxRdtase"/>
</dbReference>
<dbReference type="InterPro" id="IPR036188">
    <property type="entry name" value="FAD/NAD-bd_sf"/>
</dbReference>
<dbReference type="NCBIfam" id="NF001933">
    <property type="entry name" value="PRK00711.1"/>
    <property type="match status" value="1"/>
</dbReference>
<dbReference type="PANTHER" id="PTHR13847:SF280">
    <property type="entry name" value="D-AMINO ACID DEHYDROGENASE"/>
    <property type="match status" value="1"/>
</dbReference>
<dbReference type="PANTHER" id="PTHR13847">
    <property type="entry name" value="SARCOSINE DEHYDROGENASE-RELATED"/>
    <property type="match status" value="1"/>
</dbReference>
<dbReference type="Pfam" id="PF01266">
    <property type="entry name" value="DAO"/>
    <property type="match status" value="1"/>
</dbReference>
<dbReference type="SUPFAM" id="SSF54373">
    <property type="entry name" value="FAD-linked reductases, C-terminal domain"/>
    <property type="match status" value="1"/>
</dbReference>
<dbReference type="SUPFAM" id="SSF51905">
    <property type="entry name" value="FAD/NAD(P)-binding domain"/>
    <property type="match status" value="1"/>
</dbReference>
<protein>
    <recommendedName>
        <fullName evidence="1">D-amino acid dehydrogenase</fullName>
        <ecNumber evidence="1">1.4.99.-</ecNumber>
    </recommendedName>
</protein>
<organism>
    <name type="scientific">Shigella dysenteriae serotype 1 (strain Sd197)</name>
    <dbReference type="NCBI Taxonomy" id="300267"/>
    <lineage>
        <taxon>Bacteria</taxon>
        <taxon>Pseudomonadati</taxon>
        <taxon>Pseudomonadota</taxon>
        <taxon>Gammaproteobacteria</taxon>
        <taxon>Enterobacterales</taxon>
        <taxon>Enterobacteriaceae</taxon>
        <taxon>Shigella</taxon>
    </lineage>
</organism>
<reference key="1">
    <citation type="journal article" date="2005" name="Nucleic Acids Res.">
        <title>Genome dynamics and diversity of Shigella species, the etiologic agents of bacillary dysentery.</title>
        <authorList>
            <person name="Yang F."/>
            <person name="Yang J."/>
            <person name="Zhang X."/>
            <person name="Chen L."/>
            <person name="Jiang Y."/>
            <person name="Yan Y."/>
            <person name="Tang X."/>
            <person name="Wang J."/>
            <person name="Xiong Z."/>
            <person name="Dong J."/>
            <person name="Xue Y."/>
            <person name="Zhu Y."/>
            <person name="Xu X."/>
            <person name="Sun L."/>
            <person name="Chen S."/>
            <person name="Nie H."/>
            <person name="Peng J."/>
            <person name="Xu J."/>
            <person name="Wang Y."/>
            <person name="Yuan Z."/>
            <person name="Wen Y."/>
            <person name="Yao Z."/>
            <person name="Shen Y."/>
            <person name="Qiang B."/>
            <person name="Hou Y."/>
            <person name="Yu J."/>
            <person name="Jin Q."/>
        </authorList>
    </citation>
    <scope>NUCLEOTIDE SEQUENCE [LARGE SCALE GENOMIC DNA]</scope>
    <source>
        <strain>Sd197</strain>
    </source>
</reference>
<feature type="chain" id="PRO_1000066117" description="D-amino acid dehydrogenase">
    <location>
        <begin position="1"/>
        <end position="432"/>
    </location>
</feature>
<feature type="binding site" evidence="1">
    <location>
        <begin position="3"/>
        <end position="17"/>
    </location>
    <ligand>
        <name>FAD</name>
        <dbReference type="ChEBI" id="CHEBI:57692"/>
    </ligand>
</feature>